<feature type="chain" id="PRO_0000175342" description="DNA-directed RNA polymerase subunit alpha">
    <location>
        <begin position="1"/>
        <end position="327"/>
    </location>
</feature>
<feature type="region of interest" description="Alpha N-terminal domain (alpha-NTD)" evidence="1">
    <location>
        <begin position="1"/>
        <end position="243"/>
    </location>
</feature>
<feature type="region of interest" description="Alpha C-terminal domain (alpha-CTD)" evidence="1">
    <location>
        <begin position="260"/>
        <end position="327"/>
    </location>
</feature>
<keyword id="KW-0240">DNA-directed RNA polymerase</keyword>
<keyword id="KW-0548">Nucleotidyltransferase</keyword>
<keyword id="KW-1185">Reference proteome</keyword>
<keyword id="KW-0804">Transcription</keyword>
<keyword id="KW-0808">Transferase</keyword>
<proteinExistence type="inferred from homology"/>
<gene>
    <name evidence="1" type="primary">rpoA</name>
    <name type="ordered locus">MPN_191</name>
    <name type="ORF">MP640</name>
</gene>
<organism>
    <name type="scientific">Mycoplasma pneumoniae (strain ATCC 29342 / M129 / Subtype 1)</name>
    <name type="common">Mycoplasmoides pneumoniae</name>
    <dbReference type="NCBI Taxonomy" id="272634"/>
    <lineage>
        <taxon>Bacteria</taxon>
        <taxon>Bacillati</taxon>
        <taxon>Mycoplasmatota</taxon>
        <taxon>Mycoplasmoidales</taxon>
        <taxon>Mycoplasmoidaceae</taxon>
        <taxon>Mycoplasmoides</taxon>
    </lineage>
</organism>
<evidence type="ECO:0000255" key="1">
    <source>
        <dbReference type="HAMAP-Rule" id="MF_00059"/>
    </source>
</evidence>
<protein>
    <recommendedName>
        <fullName evidence="1">DNA-directed RNA polymerase subunit alpha</fullName>
        <shortName evidence="1">RNAP subunit alpha</shortName>
        <ecNumber evidence="1">2.7.7.6</ecNumber>
    </recommendedName>
    <alternativeName>
        <fullName evidence="1">RNA polymerase subunit alpha</fullName>
    </alternativeName>
    <alternativeName>
        <fullName evidence="1">Transcriptase subunit alpha</fullName>
    </alternativeName>
</protein>
<accession>Q50295</accession>
<sequence>MEKFLKYEIKVNNEQARANPNYGIFEVGPLESGFVITIGNAMRRVLLSCIPGASVFALSISGAKQEFAAVEGMKEDVTEVVLNFKQLVVKISDLLFEDGEMVEPPLERWPLLTVTAEKAGPVYAKDLECPAGFEVVNKDLYLFSLQTDKKVTVNVYVKQGRGFVTFLENREMINSLGIIATDSNFSPVLHCGYEVQELKTSKQKITDHLTFKIATNGAISAVDAFAMAAKILIEHLNPIVNVNESIKALNIIQEKAEERRVRSFAKQIEELDFTVRTFNCLKRSGIHTLQELLSKSLADIREIRNLGKKSEREIIKKVHELGLKLRS</sequence>
<comment type="function">
    <text evidence="1">DNA-dependent RNA polymerase catalyzes the transcription of DNA into RNA using the four ribonucleoside triphosphates as substrates.</text>
</comment>
<comment type="catalytic activity">
    <reaction evidence="1">
        <text>RNA(n) + a ribonucleoside 5'-triphosphate = RNA(n+1) + diphosphate</text>
        <dbReference type="Rhea" id="RHEA:21248"/>
        <dbReference type="Rhea" id="RHEA-COMP:14527"/>
        <dbReference type="Rhea" id="RHEA-COMP:17342"/>
        <dbReference type="ChEBI" id="CHEBI:33019"/>
        <dbReference type="ChEBI" id="CHEBI:61557"/>
        <dbReference type="ChEBI" id="CHEBI:140395"/>
        <dbReference type="EC" id="2.7.7.6"/>
    </reaction>
</comment>
<comment type="subunit">
    <text evidence="1">Homodimer. The RNAP catalytic core consists of 2 alpha, 1 beta, 1 beta' and 1 omega subunit. When a sigma factor is associated with the core the holoenzyme is formed, which can initiate transcription.</text>
</comment>
<comment type="domain">
    <text evidence="1">The N-terminal domain is essential for RNAP assembly and basal transcription, whereas the C-terminal domain is involved in interaction with transcriptional regulators and with upstream promoter elements.</text>
</comment>
<comment type="similarity">
    <text evidence="1">Belongs to the RNA polymerase alpha chain family.</text>
</comment>
<reference key="1">
    <citation type="journal article" date="1996" name="Nucleic Acids Res.">
        <title>Sequence analysis of 56 kb from the genome of the bacterium Mycoplasma pneumoniae comprising the dnaA region, the atp operon and a cluster of ribosomal protein genes.</title>
        <authorList>
            <person name="Hilbert H."/>
            <person name="Himmelreich R."/>
            <person name="Plagens H."/>
            <person name="Herrmann R."/>
        </authorList>
    </citation>
    <scope>NUCLEOTIDE SEQUENCE [GENOMIC DNA]</scope>
    <source>
        <strain>ATCC 29342 / M129 / Subtype 1</strain>
    </source>
</reference>
<reference key="2">
    <citation type="journal article" date="1996" name="Nucleic Acids Res.">
        <title>Complete sequence analysis of the genome of the bacterium Mycoplasma pneumoniae.</title>
        <authorList>
            <person name="Himmelreich R."/>
            <person name="Hilbert H."/>
            <person name="Plagens H."/>
            <person name="Pirkl E."/>
            <person name="Li B.-C."/>
            <person name="Herrmann R."/>
        </authorList>
    </citation>
    <scope>NUCLEOTIDE SEQUENCE [LARGE SCALE GENOMIC DNA]</scope>
    <source>
        <strain>ATCC 29342 / M129 / Subtype 1</strain>
    </source>
</reference>
<name>RPOA_MYCPN</name>
<dbReference type="EC" id="2.7.7.6" evidence="1"/>
<dbReference type="EMBL" id="U34795">
    <property type="protein sequence ID" value="AAC43690.1"/>
    <property type="molecule type" value="Genomic_DNA"/>
</dbReference>
<dbReference type="EMBL" id="U00089">
    <property type="protein sequence ID" value="AAB96288.1"/>
    <property type="molecule type" value="Genomic_DNA"/>
</dbReference>
<dbReference type="PIR" id="S62817">
    <property type="entry name" value="S62817"/>
</dbReference>
<dbReference type="RefSeq" id="NP_109879.1">
    <property type="nucleotide sequence ID" value="NC_000912.1"/>
</dbReference>
<dbReference type="RefSeq" id="WP_010874548.1">
    <property type="nucleotide sequence ID" value="NC_000912.1"/>
</dbReference>
<dbReference type="SMR" id="Q50295"/>
<dbReference type="IntAct" id="Q50295">
    <property type="interactions" value="21"/>
</dbReference>
<dbReference type="STRING" id="272634.MPN_191"/>
<dbReference type="EnsemblBacteria" id="AAB96288">
    <property type="protein sequence ID" value="AAB96288"/>
    <property type="gene ID" value="MPN_191"/>
</dbReference>
<dbReference type="KEGG" id="mpn:MPN_191"/>
<dbReference type="PATRIC" id="fig|272634.6.peg.209"/>
<dbReference type="HOGENOM" id="CLU_053084_0_1_14"/>
<dbReference type="OrthoDB" id="9805706at2"/>
<dbReference type="BioCyc" id="MPNE272634:G1GJ3-306-MONOMER"/>
<dbReference type="Proteomes" id="UP000000808">
    <property type="component" value="Chromosome"/>
</dbReference>
<dbReference type="GO" id="GO:0005737">
    <property type="term" value="C:cytoplasm"/>
    <property type="evidence" value="ECO:0007669"/>
    <property type="project" value="UniProtKB-ARBA"/>
</dbReference>
<dbReference type="GO" id="GO:0000428">
    <property type="term" value="C:DNA-directed RNA polymerase complex"/>
    <property type="evidence" value="ECO:0007669"/>
    <property type="project" value="UniProtKB-KW"/>
</dbReference>
<dbReference type="GO" id="GO:0003677">
    <property type="term" value="F:DNA binding"/>
    <property type="evidence" value="ECO:0007669"/>
    <property type="project" value="UniProtKB-UniRule"/>
</dbReference>
<dbReference type="GO" id="GO:0003899">
    <property type="term" value="F:DNA-directed RNA polymerase activity"/>
    <property type="evidence" value="ECO:0007669"/>
    <property type="project" value="UniProtKB-UniRule"/>
</dbReference>
<dbReference type="GO" id="GO:0046983">
    <property type="term" value="F:protein dimerization activity"/>
    <property type="evidence" value="ECO:0007669"/>
    <property type="project" value="InterPro"/>
</dbReference>
<dbReference type="GO" id="GO:0006351">
    <property type="term" value="P:DNA-templated transcription"/>
    <property type="evidence" value="ECO:0007669"/>
    <property type="project" value="UniProtKB-UniRule"/>
</dbReference>
<dbReference type="CDD" id="cd06928">
    <property type="entry name" value="RNAP_alpha_NTD"/>
    <property type="match status" value="1"/>
</dbReference>
<dbReference type="Gene3D" id="1.10.150.20">
    <property type="entry name" value="5' to 3' exonuclease, C-terminal subdomain"/>
    <property type="match status" value="1"/>
</dbReference>
<dbReference type="Gene3D" id="2.170.120.12">
    <property type="entry name" value="DNA-directed RNA polymerase, insert domain"/>
    <property type="match status" value="1"/>
</dbReference>
<dbReference type="Gene3D" id="3.30.1360.10">
    <property type="entry name" value="RNA polymerase, RBP11-like subunit"/>
    <property type="match status" value="1"/>
</dbReference>
<dbReference type="HAMAP" id="MF_00059">
    <property type="entry name" value="RNApol_bact_RpoA"/>
    <property type="match status" value="1"/>
</dbReference>
<dbReference type="InterPro" id="IPR011262">
    <property type="entry name" value="DNA-dir_RNA_pol_insert"/>
</dbReference>
<dbReference type="InterPro" id="IPR011263">
    <property type="entry name" value="DNA-dir_RNA_pol_RpoA/D/Rpb3"/>
</dbReference>
<dbReference type="InterPro" id="IPR011773">
    <property type="entry name" value="DNA-dir_RpoA"/>
</dbReference>
<dbReference type="InterPro" id="IPR036603">
    <property type="entry name" value="RBP11-like"/>
</dbReference>
<dbReference type="InterPro" id="IPR011260">
    <property type="entry name" value="RNAP_asu_C"/>
</dbReference>
<dbReference type="InterPro" id="IPR036643">
    <property type="entry name" value="RNApol_insert_sf"/>
</dbReference>
<dbReference type="NCBIfam" id="NF003519">
    <property type="entry name" value="PRK05182.2-5"/>
    <property type="match status" value="1"/>
</dbReference>
<dbReference type="NCBIfam" id="TIGR02027">
    <property type="entry name" value="rpoA"/>
    <property type="match status" value="1"/>
</dbReference>
<dbReference type="Pfam" id="PF01000">
    <property type="entry name" value="RNA_pol_A_bac"/>
    <property type="match status" value="1"/>
</dbReference>
<dbReference type="Pfam" id="PF03118">
    <property type="entry name" value="RNA_pol_A_CTD"/>
    <property type="match status" value="1"/>
</dbReference>
<dbReference type="Pfam" id="PF01193">
    <property type="entry name" value="RNA_pol_L"/>
    <property type="match status" value="1"/>
</dbReference>
<dbReference type="SMART" id="SM00662">
    <property type="entry name" value="RPOLD"/>
    <property type="match status" value="1"/>
</dbReference>
<dbReference type="SUPFAM" id="SSF47789">
    <property type="entry name" value="C-terminal domain of RNA polymerase alpha subunit"/>
    <property type="match status" value="1"/>
</dbReference>
<dbReference type="SUPFAM" id="SSF56553">
    <property type="entry name" value="Insert subdomain of RNA polymerase alpha subunit"/>
    <property type="match status" value="1"/>
</dbReference>
<dbReference type="SUPFAM" id="SSF55257">
    <property type="entry name" value="RBP11-like subunits of RNA polymerase"/>
    <property type="match status" value="1"/>
</dbReference>